<proteinExistence type="predicted"/>
<keyword id="KW-1003">Cell membrane</keyword>
<keyword id="KW-0472">Membrane</keyword>
<keyword id="KW-1185">Reference proteome</keyword>
<keyword id="KW-0812">Transmembrane</keyword>
<keyword id="KW-1133">Transmembrane helix</keyword>
<protein>
    <recommendedName>
        <fullName>Uncharacterized protein YvlA</fullName>
    </recommendedName>
</protein>
<sequence length="108" mass="11821">MNRNQAIIASLCYFSVFIAPIIVPIVAYFVVNEKETKRHAIRSLISHIVPFVGWLFLFIALLGGAVAIDGDSLLPVFVIIGGAVIYFLVVIGIIIWNVIQGIKVLRAA</sequence>
<evidence type="ECO:0000255" key="1"/>
<evidence type="ECO:0000305" key="2"/>
<reference key="1">
    <citation type="submission" date="1997-11" db="EMBL/GenBank/DDBJ databases">
        <title>Nucleotide sequence of the 300-304 chromosomal segment of Bacillus subtilis.</title>
        <authorList>
            <person name="Lazarevic V."/>
            <person name="Soldo B."/>
            <person name="Rivolta C."/>
            <person name="Reynolds S."/>
            <person name="Mauel C."/>
            <person name="Karamata D."/>
        </authorList>
    </citation>
    <scope>NUCLEOTIDE SEQUENCE [GENOMIC DNA]</scope>
</reference>
<reference key="2">
    <citation type="journal article" date="1997" name="Nature">
        <title>The complete genome sequence of the Gram-positive bacterium Bacillus subtilis.</title>
        <authorList>
            <person name="Kunst F."/>
            <person name="Ogasawara N."/>
            <person name="Moszer I."/>
            <person name="Albertini A.M."/>
            <person name="Alloni G."/>
            <person name="Azevedo V."/>
            <person name="Bertero M.G."/>
            <person name="Bessieres P."/>
            <person name="Bolotin A."/>
            <person name="Borchert S."/>
            <person name="Borriss R."/>
            <person name="Boursier L."/>
            <person name="Brans A."/>
            <person name="Braun M."/>
            <person name="Brignell S.C."/>
            <person name="Bron S."/>
            <person name="Brouillet S."/>
            <person name="Bruschi C.V."/>
            <person name="Caldwell B."/>
            <person name="Capuano V."/>
            <person name="Carter N.M."/>
            <person name="Choi S.-K."/>
            <person name="Codani J.-J."/>
            <person name="Connerton I.F."/>
            <person name="Cummings N.J."/>
            <person name="Daniel R.A."/>
            <person name="Denizot F."/>
            <person name="Devine K.M."/>
            <person name="Duesterhoeft A."/>
            <person name="Ehrlich S.D."/>
            <person name="Emmerson P.T."/>
            <person name="Entian K.-D."/>
            <person name="Errington J."/>
            <person name="Fabret C."/>
            <person name="Ferrari E."/>
            <person name="Foulger D."/>
            <person name="Fritz C."/>
            <person name="Fujita M."/>
            <person name="Fujita Y."/>
            <person name="Fuma S."/>
            <person name="Galizzi A."/>
            <person name="Galleron N."/>
            <person name="Ghim S.-Y."/>
            <person name="Glaser P."/>
            <person name="Goffeau A."/>
            <person name="Golightly E.J."/>
            <person name="Grandi G."/>
            <person name="Guiseppi G."/>
            <person name="Guy B.J."/>
            <person name="Haga K."/>
            <person name="Haiech J."/>
            <person name="Harwood C.R."/>
            <person name="Henaut A."/>
            <person name="Hilbert H."/>
            <person name="Holsappel S."/>
            <person name="Hosono S."/>
            <person name="Hullo M.-F."/>
            <person name="Itaya M."/>
            <person name="Jones L.-M."/>
            <person name="Joris B."/>
            <person name="Karamata D."/>
            <person name="Kasahara Y."/>
            <person name="Klaerr-Blanchard M."/>
            <person name="Klein C."/>
            <person name="Kobayashi Y."/>
            <person name="Koetter P."/>
            <person name="Koningstein G."/>
            <person name="Krogh S."/>
            <person name="Kumano M."/>
            <person name="Kurita K."/>
            <person name="Lapidus A."/>
            <person name="Lardinois S."/>
            <person name="Lauber J."/>
            <person name="Lazarevic V."/>
            <person name="Lee S.-M."/>
            <person name="Levine A."/>
            <person name="Liu H."/>
            <person name="Masuda S."/>
            <person name="Mauel C."/>
            <person name="Medigue C."/>
            <person name="Medina N."/>
            <person name="Mellado R.P."/>
            <person name="Mizuno M."/>
            <person name="Moestl D."/>
            <person name="Nakai S."/>
            <person name="Noback M."/>
            <person name="Noone D."/>
            <person name="O'Reilly M."/>
            <person name="Ogawa K."/>
            <person name="Ogiwara A."/>
            <person name="Oudega B."/>
            <person name="Park S.-H."/>
            <person name="Parro V."/>
            <person name="Pohl T.M."/>
            <person name="Portetelle D."/>
            <person name="Porwollik S."/>
            <person name="Prescott A.M."/>
            <person name="Presecan E."/>
            <person name="Pujic P."/>
            <person name="Purnelle B."/>
            <person name="Rapoport G."/>
            <person name="Rey M."/>
            <person name="Reynolds S."/>
            <person name="Rieger M."/>
            <person name="Rivolta C."/>
            <person name="Rocha E."/>
            <person name="Roche B."/>
            <person name="Rose M."/>
            <person name="Sadaie Y."/>
            <person name="Sato T."/>
            <person name="Scanlan E."/>
            <person name="Schleich S."/>
            <person name="Schroeter R."/>
            <person name="Scoffone F."/>
            <person name="Sekiguchi J."/>
            <person name="Sekowska A."/>
            <person name="Seror S.J."/>
            <person name="Serror P."/>
            <person name="Shin B.-S."/>
            <person name="Soldo B."/>
            <person name="Sorokin A."/>
            <person name="Tacconi E."/>
            <person name="Takagi T."/>
            <person name="Takahashi H."/>
            <person name="Takemaru K."/>
            <person name="Takeuchi M."/>
            <person name="Tamakoshi A."/>
            <person name="Tanaka T."/>
            <person name="Terpstra P."/>
            <person name="Tognoni A."/>
            <person name="Tosato V."/>
            <person name="Uchiyama S."/>
            <person name="Vandenbol M."/>
            <person name="Vannier F."/>
            <person name="Vassarotti A."/>
            <person name="Viari A."/>
            <person name="Wambutt R."/>
            <person name="Wedler E."/>
            <person name="Wedler H."/>
            <person name="Weitzenegger T."/>
            <person name="Winters P."/>
            <person name="Wipat A."/>
            <person name="Yamamoto H."/>
            <person name="Yamane K."/>
            <person name="Yasumoto K."/>
            <person name="Yata K."/>
            <person name="Yoshida K."/>
            <person name="Yoshikawa H.-F."/>
            <person name="Zumstein E."/>
            <person name="Yoshikawa H."/>
            <person name="Danchin A."/>
        </authorList>
    </citation>
    <scope>NUCLEOTIDE SEQUENCE [LARGE SCALE GENOMIC DNA]</scope>
    <source>
        <strain>168</strain>
    </source>
</reference>
<name>YVLA_BACSU</name>
<dbReference type="EMBL" id="AF017113">
    <property type="protein sequence ID" value="AAC67273.1"/>
    <property type="molecule type" value="Genomic_DNA"/>
</dbReference>
<dbReference type="EMBL" id="AL009126">
    <property type="protein sequence ID" value="CAB15518.1"/>
    <property type="molecule type" value="Genomic_DNA"/>
</dbReference>
<dbReference type="PIR" id="C70043">
    <property type="entry name" value="C70043"/>
</dbReference>
<dbReference type="RefSeq" id="NP_391393.1">
    <property type="nucleotide sequence ID" value="NC_000964.3"/>
</dbReference>
<dbReference type="RefSeq" id="WP_003244375.1">
    <property type="nucleotide sequence ID" value="NZ_OZ025638.1"/>
</dbReference>
<dbReference type="FunCoup" id="O34322">
    <property type="interactions" value="8"/>
</dbReference>
<dbReference type="STRING" id="224308.BSU35130"/>
<dbReference type="PaxDb" id="224308-BSU35130"/>
<dbReference type="EnsemblBacteria" id="CAB15518">
    <property type="protein sequence ID" value="CAB15518"/>
    <property type="gene ID" value="BSU_35130"/>
</dbReference>
<dbReference type="GeneID" id="936640"/>
<dbReference type="KEGG" id="bsu:BSU35130"/>
<dbReference type="PATRIC" id="fig|224308.179.peg.3803"/>
<dbReference type="eggNOG" id="ENOG5030CTN">
    <property type="taxonomic scope" value="Bacteria"/>
</dbReference>
<dbReference type="InParanoid" id="O34322"/>
<dbReference type="OrthoDB" id="2328241at2"/>
<dbReference type="BioCyc" id="BSUB:BSU35130-MONOMER"/>
<dbReference type="Proteomes" id="UP000001570">
    <property type="component" value="Chromosome"/>
</dbReference>
<dbReference type="GO" id="GO:0005886">
    <property type="term" value="C:plasma membrane"/>
    <property type="evidence" value="ECO:0007669"/>
    <property type="project" value="UniProtKB-SubCell"/>
</dbReference>
<feature type="chain" id="PRO_0000049943" description="Uncharacterized protein YvlA">
    <location>
        <begin position="1"/>
        <end position="108"/>
    </location>
</feature>
<feature type="transmembrane region" description="Helical" evidence="1">
    <location>
        <begin position="10"/>
        <end position="32"/>
    </location>
</feature>
<feature type="transmembrane region" description="Helical" evidence="1">
    <location>
        <begin position="45"/>
        <end position="67"/>
    </location>
</feature>
<feature type="transmembrane region" description="Helical" evidence="1">
    <location>
        <begin position="77"/>
        <end position="99"/>
    </location>
</feature>
<accession>O34322</accession>
<comment type="subcellular location">
    <subcellularLocation>
        <location evidence="2">Cell membrane</location>
        <topology evidence="2">Multi-pass membrane protein</topology>
    </subcellularLocation>
</comment>
<organism>
    <name type="scientific">Bacillus subtilis (strain 168)</name>
    <dbReference type="NCBI Taxonomy" id="224308"/>
    <lineage>
        <taxon>Bacteria</taxon>
        <taxon>Bacillati</taxon>
        <taxon>Bacillota</taxon>
        <taxon>Bacilli</taxon>
        <taxon>Bacillales</taxon>
        <taxon>Bacillaceae</taxon>
        <taxon>Bacillus</taxon>
    </lineage>
</organism>
<gene>
    <name type="primary">yvlA</name>
    <name type="ordered locus">BSU35130</name>
</gene>